<feature type="signal peptide" evidence="1">
    <location>
        <begin position="1"/>
        <end position="17"/>
    </location>
</feature>
<feature type="chain" id="PRO_5004891196" description="Serine protease vicPb" evidence="1">
    <location>
        <begin position="18"/>
        <end position="534"/>
    </location>
</feature>
<feature type="active site" description="Charge relay system" evidence="1">
    <location>
        <position position="174"/>
    </location>
</feature>
<feature type="active site" description="Charge relay system" evidence="1">
    <location>
        <position position="451"/>
    </location>
</feature>
<feature type="glycosylation site" description="N-linked (GlcNAc...) asparagine" evidence="2">
    <location>
        <position position="34"/>
    </location>
</feature>
<feature type="glycosylation site" description="N-linked (GlcNAc...) asparagine" evidence="2">
    <location>
        <position position="65"/>
    </location>
</feature>
<feature type="glycosylation site" description="N-linked (GlcNAc...) asparagine" evidence="2">
    <location>
        <position position="126"/>
    </location>
</feature>
<feature type="glycosylation site" description="N-linked (GlcNAc...) asparagine" evidence="2">
    <location>
        <position position="297"/>
    </location>
</feature>
<feature type="glycosylation site" description="N-linked (GlcNAc...) asparagine" evidence="2">
    <location>
        <position position="335"/>
    </location>
</feature>
<feature type="glycosylation site" description="N-linked (GlcNAc...) asparagine" evidence="2">
    <location>
        <position position="352"/>
    </location>
</feature>
<feature type="glycosylation site" description="N-linked (GlcNAc...) asparagine" evidence="2">
    <location>
        <position position="415"/>
    </location>
</feature>
<feature type="glycosylation site" description="N-linked (GlcNAc...) asparagine" evidence="2">
    <location>
        <position position="437"/>
    </location>
</feature>
<comment type="function">
    <text evidence="3 6">Serine protease, part of the gene cluster that mediates the biosynthesis of the secondary metabolite victorin, the molecular basis for Victoria blight of oats (PubMed:32929037). Within the pathway, vicPa and vicPb are probably involved in the processing of the vicA1 and vicA2 precursors (Probable). The pathway starts with the processing of the precursor vicA1 by several endopeptidases including kexin proteases as well as the cluster-specific S28 family peptidases vicPa and vicPb to produce 7 identical copies of the hexapeptide Gly-Leu-Lys-Leu-Ala-Phe. After being excised from the precursor peptide, the core peptides are cyclized and modified post-translationally by enzymes encoded within the gene cluster. The ustYa family oxidase vicYb is required for the formation of the macrocycle in victorin and the copper amine oxidases (CAOs) vicK1 and vicK2 are responsible for converting victorin to the active form by oxidizing the N-terminal glycyl residue in the peptides to glyoxylate. Relaxed substrate specificity of enzymes in the victorin biosynthetic pathway results in a metabolic grid that produces a set of analogs including victorinines B, C, E or HV-toxin M (Probable).</text>
</comment>
<comment type="pathway">
    <text evidence="6">Mycotoxin biosynthesis.</text>
</comment>
<comment type="similarity">
    <text evidence="5">Belongs to the peptidase S28 family.</text>
</comment>
<reference key="1">
    <citation type="journal article" date="2013" name="PLoS Genet.">
        <title>Comparative genome structure, secondary metabolite, and effector coding capacity across Cochliobolus pathogens.</title>
        <authorList>
            <person name="Condon B.J."/>
            <person name="Leng Y."/>
            <person name="Wu D."/>
            <person name="Bushley K.E."/>
            <person name="Ohm R.A."/>
            <person name="Otillar R."/>
            <person name="Martin J."/>
            <person name="Schackwitz W."/>
            <person name="Grimwood J."/>
            <person name="MohdZainudin N."/>
            <person name="Xue C."/>
            <person name="Wang R."/>
            <person name="Manning V.A."/>
            <person name="Dhillon B."/>
            <person name="Tu Z.J."/>
            <person name="Steffenson B.J."/>
            <person name="Salamov A."/>
            <person name="Sun H."/>
            <person name="Lowry S."/>
            <person name="LaButti K."/>
            <person name="Han J."/>
            <person name="Copeland A."/>
            <person name="Lindquist E."/>
            <person name="Barry K."/>
            <person name="Schmutz J."/>
            <person name="Baker S.E."/>
            <person name="Ciuffetti L.M."/>
            <person name="Grigoriev I.V."/>
            <person name="Zhong S."/>
            <person name="Turgeon B.G."/>
        </authorList>
    </citation>
    <scope>NUCLEOTIDE SEQUENCE [LARGE SCALE GENOMIC DNA]</scope>
    <source>
        <strain>FI3</strain>
    </source>
</reference>
<reference key="2">
    <citation type="journal article" date="2020" name="Proc. Natl. Acad. Sci. U.S.A.">
        <title>Victorin, the host-selective cyclic peptide toxin from the oat pathogen Cochliobolus victoriae, is ribosomally encoded.</title>
        <authorList>
            <person name="Kessler S.C."/>
            <person name="Zhang X."/>
            <person name="McDonald M.C."/>
            <person name="Gilchrist C.L.M."/>
            <person name="Lin Z."/>
            <person name="Rightmyer A."/>
            <person name="Solomon P.S."/>
            <person name="Turgeon B.G."/>
            <person name="Chooi Y.H."/>
        </authorList>
    </citation>
    <scope>FUNCTION</scope>
</reference>
<protein>
    <recommendedName>
        <fullName evidence="4">Serine protease vicPb</fullName>
        <ecNumber evidence="6">3.4.-.-</ecNumber>
    </recommendedName>
    <alternativeName>
        <fullName evidence="4">Victorin biosynthesis cluster protein Pb</fullName>
    </alternativeName>
</protein>
<name>VICPB_BIPV3</name>
<evidence type="ECO:0000255" key="1"/>
<evidence type="ECO:0000255" key="2">
    <source>
        <dbReference type="PROSITE-ProRule" id="PRU00498"/>
    </source>
</evidence>
<evidence type="ECO:0000269" key="3">
    <source>
    </source>
</evidence>
<evidence type="ECO:0000303" key="4">
    <source>
    </source>
</evidence>
<evidence type="ECO:0000305" key="5"/>
<evidence type="ECO:0000305" key="6">
    <source>
    </source>
</evidence>
<dbReference type="EC" id="3.4.-.-" evidence="6"/>
<dbReference type="EMBL" id="KI969009">
    <property type="protein sequence ID" value="EUN20465.1"/>
    <property type="molecule type" value="Genomic_DNA"/>
</dbReference>
<dbReference type="RefSeq" id="XP_014550039.1">
    <property type="nucleotide sequence ID" value="XM_014694553.1"/>
</dbReference>
<dbReference type="SMR" id="W7E3A0"/>
<dbReference type="GeneID" id="26250955"/>
<dbReference type="HOGENOM" id="CLU_023630_1_0_1"/>
<dbReference type="OrthoDB" id="3461at28556"/>
<dbReference type="Proteomes" id="UP000054337">
    <property type="component" value="Unassembled WGS sequence"/>
</dbReference>
<dbReference type="GO" id="GO:0008239">
    <property type="term" value="F:dipeptidyl-peptidase activity"/>
    <property type="evidence" value="ECO:0007669"/>
    <property type="project" value="TreeGrafter"/>
</dbReference>
<dbReference type="GO" id="GO:0070008">
    <property type="term" value="F:serine-type exopeptidase activity"/>
    <property type="evidence" value="ECO:0007669"/>
    <property type="project" value="InterPro"/>
</dbReference>
<dbReference type="GO" id="GO:0006508">
    <property type="term" value="P:proteolysis"/>
    <property type="evidence" value="ECO:0007669"/>
    <property type="project" value="UniProtKB-KW"/>
</dbReference>
<dbReference type="Gene3D" id="3.40.50.1820">
    <property type="entry name" value="alpha/beta hydrolase"/>
    <property type="match status" value="2"/>
</dbReference>
<dbReference type="InterPro" id="IPR029058">
    <property type="entry name" value="AB_hydrolase_fold"/>
</dbReference>
<dbReference type="InterPro" id="IPR008758">
    <property type="entry name" value="Peptidase_S28"/>
</dbReference>
<dbReference type="PANTHER" id="PTHR11010">
    <property type="entry name" value="PROTEASE S28 PRO-X CARBOXYPEPTIDASE-RELATED"/>
    <property type="match status" value="1"/>
</dbReference>
<dbReference type="PANTHER" id="PTHR11010:SF23">
    <property type="entry name" value="SERINE PEPTIDASE"/>
    <property type="match status" value="1"/>
</dbReference>
<dbReference type="Pfam" id="PF05577">
    <property type="entry name" value="Peptidase_S28"/>
    <property type="match status" value="1"/>
</dbReference>
<dbReference type="SUPFAM" id="SSF53474">
    <property type="entry name" value="alpha/beta-Hydrolases"/>
    <property type="match status" value="1"/>
</dbReference>
<gene>
    <name evidence="4" type="primary">vicPb</name>
    <name type="ORF">COCVIDRAFT_116699</name>
</gene>
<keyword id="KW-0325">Glycoprotein</keyword>
<keyword id="KW-0378">Hydrolase</keyword>
<keyword id="KW-0645">Protease</keyword>
<keyword id="KW-0720">Serine protease</keyword>
<keyword id="KW-0732">Signal</keyword>
<keyword id="KW-0843">Virulence</keyword>
<proteinExistence type="inferred from homology"/>
<organism>
    <name type="scientific">Bipolaris victoriae (strain FI3)</name>
    <name type="common">Victoria blight of oats agent</name>
    <name type="synonym">Cochliobolus victoriae</name>
    <dbReference type="NCBI Taxonomy" id="930091"/>
    <lineage>
        <taxon>Eukaryota</taxon>
        <taxon>Fungi</taxon>
        <taxon>Dikarya</taxon>
        <taxon>Ascomycota</taxon>
        <taxon>Pezizomycotina</taxon>
        <taxon>Dothideomycetes</taxon>
        <taxon>Pleosporomycetidae</taxon>
        <taxon>Pleosporales</taxon>
        <taxon>Pleosporineae</taxon>
        <taxon>Pleosporaceae</taxon>
        <taxon>Bipolaris</taxon>
    </lineage>
</organism>
<sequence length="534" mass="60801">MLRYLLIPILYLQVVLGVLSEVLPSLKPSVVPKNTSLLSGRGVFRQLIDHTHPEVGTFSQKYWFNTTYWGGPGSPIIFYTPGQHPATNRLYYLTDTTLPGLIAKEVRGAVVLVEHRYFGESQPFDNLSTSNLQYLALDQVLADFVHFARTVELPFDLSGNSHPLRTPWIWVGNSYSATLVAWTERLFPNTFWAYYASGAAVNSMQDFWQFNYPTQQGMPQSCRSNLEAIISHVDNVFLSGSPEQKQELKIRFGLQDLSLLEDTAYALSQPIIGWTLIQPSDTHTQFSEMCNAIENANFSSSRRDFGSKTNFQTVLDNYADWFKTSYLPRLCERPNYSGWTGRNSVQCLDTVNLSSQAFHDLSVQNDDRVWDWIACNYFFFWQTGSPIDTPTIFSRLIDPVYYERRCRLIFPKEGNATYGIAAGVTDKSMNALTGGWNRTGKRILFTNGEFDPWRSASVSSVFRPDGPMQSTSQQPIILIKGVQHQADMYVRNRINKEVREAMDTGIAQISRWVLDFYTENSKTLAHDLQGFCVH</sequence>
<accession>W7E3A0</accession>